<name>RS27_METBF</name>
<protein>
    <recommendedName>
        <fullName evidence="1">Small ribosomal subunit protein eS27</fullName>
    </recommendedName>
    <alternativeName>
        <fullName evidence="2">30S ribosomal protein S27e</fullName>
    </alternativeName>
</protein>
<gene>
    <name evidence="1" type="primary">rps27e</name>
    <name type="ordered locus">Mbar_A1568</name>
</gene>
<organism>
    <name type="scientific">Methanosarcina barkeri (strain Fusaro / DSM 804)</name>
    <dbReference type="NCBI Taxonomy" id="269797"/>
    <lineage>
        <taxon>Archaea</taxon>
        <taxon>Methanobacteriati</taxon>
        <taxon>Methanobacteriota</taxon>
        <taxon>Stenosarchaea group</taxon>
        <taxon>Methanomicrobia</taxon>
        <taxon>Methanosarcinales</taxon>
        <taxon>Methanosarcinaceae</taxon>
        <taxon>Methanosarcina</taxon>
    </lineage>
</organism>
<proteinExistence type="inferred from homology"/>
<accession>Q46C77</accession>
<comment type="cofactor">
    <cofactor evidence="1">
        <name>Zn(2+)</name>
        <dbReference type="ChEBI" id="CHEBI:29105"/>
    </cofactor>
    <text evidence="1">Binds 1 zinc ion per subunit.</text>
</comment>
<comment type="subunit">
    <text evidence="1">Part of the 30S ribosomal subunit.</text>
</comment>
<comment type="similarity">
    <text evidence="1">Belongs to the eukaryotic ribosomal protein eS27 family.</text>
</comment>
<dbReference type="EMBL" id="CP000099">
    <property type="protein sequence ID" value="AAZ70515.1"/>
    <property type="molecule type" value="Genomic_DNA"/>
</dbReference>
<dbReference type="SMR" id="Q46C77"/>
<dbReference type="STRING" id="269797.Mbar_A1568"/>
<dbReference type="PaxDb" id="269797-Mbar_A1568"/>
<dbReference type="KEGG" id="mba:Mbar_A1568"/>
<dbReference type="eggNOG" id="arCOG04108">
    <property type="taxonomic scope" value="Archaea"/>
</dbReference>
<dbReference type="HOGENOM" id="CLU_199465_0_0_2"/>
<dbReference type="OrthoDB" id="5718at2157"/>
<dbReference type="GO" id="GO:1990904">
    <property type="term" value="C:ribonucleoprotein complex"/>
    <property type="evidence" value="ECO:0007669"/>
    <property type="project" value="UniProtKB-KW"/>
</dbReference>
<dbReference type="GO" id="GO:0005840">
    <property type="term" value="C:ribosome"/>
    <property type="evidence" value="ECO:0007669"/>
    <property type="project" value="UniProtKB-KW"/>
</dbReference>
<dbReference type="GO" id="GO:0003735">
    <property type="term" value="F:structural constituent of ribosome"/>
    <property type="evidence" value="ECO:0007669"/>
    <property type="project" value="InterPro"/>
</dbReference>
<dbReference type="GO" id="GO:0008270">
    <property type="term" value="F:zinc ion binding"/>
    <property type="evidence" value="ECO:0007669"/>
    <property type="project" value="UniProtKB-UniRule"/>
</dbReference>
<dbReference type="GO" id="GO:0006412">
    <property type="term" value="P:translation"/>
    <property type="evidence" value="ECO:0007669"/>
    <property type="project" value="UniProtKB-UniRule"/>
</dbReference>
<dbReference type="FunFam" id="2.20.25.100:FF:000002">
    <property type="entry name" value="30S ribosomal protein S27e"/>
    <property type="match status" value="1"/>
</dbReference>
<dbReference type="Gene3D" id="2.20.25.100">
    <property type="entry name" value="Zn-binding ribosomal proteins"/>
    <property type="match status" value="1"/>
</dbReference>
<dbReference type="HAMAP" id="MF_00371">
    <property type="entry name" value="Ribosomal_eS27"/>
    <property type="match status" value="1"/>
</dbReference>
<dbReference type="InterPro" id="IPR000592">
    <property type="entry name" value="Ribosomal_eS27"/>
</dbReference>
<dbReference type="InterPro" id="IPR023407">
    <property type="entry name" value="Ribosomal_eS27_Zn-bd_dom_sf"/>
</dbReference>
<dbReference type="InterPro" id="IPR011332">
    <property type="entry name" value="Ribosomal_zn-bd"/>
</dbReference>
<dbReference type="NCBIfam" id="NF001629">
    <property type="entry name" value="PRK00415.1"/>
    <property type="match status" value="1"/>
</dbReference>
<dbReference type="Pfam" id="PF01667">
    <property type="entry name" value="Ribosomal_S27e"/>
    <property type="match status" value="1"/>
</dbReference>
<dbReference type="SUPFAM" id="SSF57829">
    <property type="entry name" value="Zn-binding ribosomal proteins"/>
    <property type="match status" value="1"/>
</dbReference>
<dbReference type="PROSITE" id="PS01168">
    <property type="entry name" value="RIBOSOMAL_S27E"/>
    <property type="match status" value="1"/>
</dbReference>
<sequence>MVDYIQRPKSRFLRVKCNDCENEQIIFGSASRKITCVVCGRTLAEPTGGKSTITTHILEVLE</sequence>
<feature type="chain" id="PRO_1000007134" description="Small ribosomal subunit protein eS27">
    <location>
        <begin position="1"/>
        <end position="62"/>
    </location>
</feature>
<feature type="zinc finger region" description="C4-type" evidence="1">
    <location>
        <begin position="17"/>
        <end position="39"/>
    </location>
</feature>
<feature type="binding site" evidence="1">
    <location>
        <position position="17"/>
    </location>
    <ligand>
        <name>Zn(2+)</name>
        <dbReference type="ChEBI" id="CHEBI:29105"/>
    </ligand>
</feature>
<feature type="binding site" evidence="1">
    <location>
        <position position="20"/>
    </location>
    <ligand>
        <name>Zn(2+)</name>
        <dbReference type="ChEBI" id="CHEBI:29105"/>
    </ligand>
</feature>
<feature type="binding site" evidence="1">
    <location>
        <position position="36"/>
    </location>
    <ligand>
        <name>Zn(2+)</name>
        <dbReference type="ChEBI" id="CHEBI:29105"/>
    </ligand>
</feature>
<feature type="binding site" evidence="1">
    <location>
        <position position="39"/>
    </location>
    <ligand>
        <name>Zn(2+)</name>
        <dbReference type="ChEBI" id="CHEBI:29105"/>
    </ligand>
</feature>
<keyword id="KW-0479">Metal-binding</keyword>
<keyword id="KW-0687">Ribonucleoprotein</keyword>
<keyword id="KW-0689">Ribosomal protein</keyword>
<keyword id="KW-0862">Zinc</keyword>
<keyword id="KW-0863">Zinc-finger</keyword>
<evidence type="ECO:0000255" key="1">
    <source>
        <dbReference type="HAMAP-Rule" id="MF_00371"/>
    </source>
</evidence>
<evidence type="ECO:0000305" key="2"/>
<reference key="1">
    <citation type="journal article" date="2006" name="J. Bacteriol.">
        <title>The Methanosarcina barkeri genome: comparative analysis with Methanosarcina acetivorans and Methanosarcina mazei reveals extensive rearrangement within methanosarcinal genomes.</title>
        <authorList>
            <person name="Maeder D.L."/>
            <person name="Anderson I."/>
            <person name="Brettin T.S."/>
            <person name="Bruce D.C."/>
            <person name="Gilna P."/>
            <person name="Han C.S."/>
            <person name="Lapidus A."/>
            <person name="Metcalf W.W."/>
            <person name="Saunders E."/>
            <person name="Tapia R."/>
            <person name="Sowers K.R."/>
        </authorList>
    </citation>
    <scope>NUCLEOTIDE SEQUENCE [LARGE SCALE GENOMIC DNA]</scope>
    <source>
        <strain>Fusaro / DSM 804</strain>
    </source>
</reference>